<evidence type="ECO:0000255" key="1">
    <source>
        <dbReference type="HAMAP-Rule" id="MF_00528"/>
    </source>
</evidence>
<sequence length="185" mass="20190">MIILASHSPRRQELLKRIVPDFESHPASINERALPVLDPPAYVQSLATAKGQSLVPSYPGATIIAADTMVAFQGKLLGKPHDRAEAKQMITALGGQTHQVYTGLWVRLDNGSVRQQVVTTDVTFWPLSEADVESYLAEDAYQDKAGAYGIQDAGALLVKSIHGDFYNVMGLPISTLYRMLLAEPQ</sequence>
<feature type="chain" id="PRO_1000127790" description="dTTP/UTP pyrophosphatase">
    <location>
        <begin position="1"/>
        <end position="185"/>
    </location>
</feature>
<feature type="active site" description="Proton acceptor" evidence="1">
    <location>
        <position position="67"/>
    </location>
</feature>
<feature type="site" description="Important for substrate specificity" evidence="1">
    <location>
        <position position="10"/>
    </location>
</feature>
<feature type="site" description="Important for substrate specificity" evidence="1">
    <location>
        <position position="68"/>
    </location>
</feature>
<feature type="site" description="Important for substrate specificity" evidence="1">
    <location>
        <position position="151"/>
    </location>
</feature>
<proteinExistence type="inferred from homology"/>
<organism>
    <name type="scientific">Lacticaseibacillus casei (strain BL23)</name>
    <name type="common">Lactobacillus casei</name>
    <dbReference type="NCBI Taxonomy" id="543734"/>
    <lineage>
        <taxon>Bacteria</taxon>
        <taxon>Bacillati</taxon>
        <taxon>Bacillota</taxon>
        <taxon>Bacilli</taxon>
        <taxon>Lactobacillales</taxon>
        <taxon>Lactobacillaceae</taxon>
        <taxon>Lacticaseibacillus</taxon>
    </lineage>
</organism>
<gene>
    <name type="ordered locus">LCABL_24150</name>
</gene>
<comment type="function">
    <text evidence="1">Nucleoside triphosphate pyrophosphatase that hydrolyzes dTTP and UTP. May have a dual role in cell division arrest and in preventing the incorporation of modified nucleotides into cellular nucleic acids.</text>
</comment>
<comment type="catalytic activity">
    <reaction evidence="1">
        <text>dTTP + H2O = dTMP + diphosphate + H(+)</text>
        <dbReference type="Rhea" id="RHEA:28534"/>
        <dbReference type="ChEBI" id="CHEBI:15377"/>
        <dbReference type="ChEBI" id="CHEBI:15378"/>
        <dbReference type="ChEBI" id="CHEBI:33019"/>
        <dbReference type="ChEBI" id="CHEBI:37568"/>
        <dbReference type="ChEBI" id="CHEBI:63528"/>
        <dbReference type="EC" id="3.6.1.9"/>
    </reaction>
</comment>
<comment type="catalytic activity">
    <reaction evidence="1">
        <text>UTP + H2O = UMP + diphosphate + H(+)</text>
        <dbReference type="Rhea" id="RHEA:29395"/>
        <dbReference type="ChEBI" id="CHEBI:15377"/>
        <dbReference type="ChEBI" id="CHEBI:15378"/>
        <dbReference type="ChEBI" id="CHEBI:33019"/>
        <dbReference type="ChEBI" id="CHEBI:46398"/>
        <dbReference type="ChEBI" id="CHEBI:57865"/>
        <dbReference type="EC" id="3.6.1.9"/>
    </reaction>
</comment>
<comment type="cofactor">
    <cofactor evidence="1">
        <name>a divalent metal cation</name>
        <dbReference type="ChEBI" id="CHEBI:60240"/>
    </cofactor>
</comment>
<comment type="subcellular location">
    <subcellularLocation>
        <location evidence="1">Cytoplasm</location>
    </subcellularLocation>
</comment>
<comment type="similarity">
    <text evidence="1">Belongs to the Maf family. YhdE subfamily.</text>
</comment>
<keyword id="KW-0963">Cytoplasm</keyword>
<keyword id="KW-0378">Hydrolase</keyword>
<keyword id="KW-0546">Nucleotide metabolism</keyword>
<protein>
    <recommendedName>
        <fullName evidence="1">dTTP/UTP pyrophosphatase</fullName>
        <shortName evidence="1">dTTPase/UTPase</shortName>
        <ecNumber evidence="1">3.6.1.9</ecNumber>
    </recommendedName>
    <alternativeName>
        <fullName evidence="1">Nucleoside triphosphate pyrophosphatase</fullName>
    </alternativeName>
    <alternativeName>
        <fullName evidence="1">Nucleotide pyrophosphatase</fullName>
        <shortName evidence="1">Nucleotide PPase</shortName>
    </alternativeName>
</protein>
<reference key="1">
    <citation type="submission" date="2008-06" db="EMBL/GenBank/DDBJ databases">
        <title>Lactobacillus casei BL23 complete genome sequence.</title>
        <authorList>
            <person name="Maze A."/>
            <person name="Boel G."/>
            <person name="Bourand A."/>
            <person name="Loux V."/>
            <person name="Gibrat J.F."/>
            <person name="Zuniga M."/>
            <person name="Hartke A."/>
            <person name="Deutscher J."/>
        </authorList>
    </citation>
    <scope>NUCLEOTIDE SEQUENCE [LARGE SCALE GENOMIC DNA]</scope>
    <source>
        <strain>BL23</strain>
    </source>
</reference>
<accession>B3W9W2</accession>
<dbReference type="EC" id="3.6.1.9" evidence="1"/>
<dbReference type="EMBL" id="FM177140">
    <property type="protein sequence ID" value="CAQ67481.1"/>
    <property type="molecule type" value="Genomic_DNA"/>
</dbReference>
<dbReference type="SMR" id="B3W9W2"/>
<dbReference type="KEGG" id="lcb:LCABL_24150"/>
<dbReference type="HOGENOM" id="CLU_040416_0_0_9"/>
<dbReference type="GO" id="GO:0005737">
    <property type="term" value="C:cytoplasm"/>
    <property type="evidence" value="ECO:0007669"/>
    <property type="project" value="UniProtKB-SubCell"/>
</dbReference>
<dbReference type="GO" id="GO:0036218">
    <property type="term" value="F:dTTP diphosphatase activity"/>
    <property type="evidence" value="ECO:0007669"/>
    <property type="project" value="RHEA"/>
</dbReference>
<dbReference type="GO" id="GO:0036221">
    <property type="term" value="F:UTP diphosphatase activity"/>
    <property type="evidence" value="ECO:0007669"/>
    <property type="project" value="RHEA"/>
</dbReference>
<dbReference type="GO" id="GO:0009117">
    <property type="term" value="P:nucleotide metabolic process"/>
    <property type="evidence" value="ECO:0007669"/>
    <property type="project" value="UniProtKB-KW"/>
</dbReference>
<dbReference type="CDD" id="cd00555">
    <property type="entry name" value="Maf"/>
    <property type="match status" value="1"/>
</dbReference>
<dbReference type="Gene3D" id="3.90.950.10">
    <property type="match status" value="1"/>
</dbReference>
<dbReference type="HAMAP" id="MF_00528">
    <property type="entry name" value="Maf"/>
    <property type="match status" value="1"/>
</dbReference>
<dbReference type="InterPro" id="IPR029001">
    <property type="entry name" value="ITPase-like_fam"/>
</dbReference>
<dbReference type="InterPro" id="IPR003697">
    <property type="entry name" value="Maf-like"/>
</dbReference>
<dbReference type="NCBIfam" id="TIGR00172">
    <property type="entry name" value="maf"/>
    <property type="match status" value="1"/>
</dbReference>
<dbReference type="PANTHER" id="PTHR43213">
    <property type="entry name" value="BIFUNCTIONAL DTTP/UTP PYROPHOSPHATASE/METHYLTRANSFERASE PROTEIN-RELATED"/>
    <property type="match status" value="1"/>
</dbReference>
<dbReference type="PANTHER" id="PTHR43213:SF5">
    <property type="entry name" value="BIFUNCTIONAL DTTP_UTP PYROPHOSPHATASE_METHYLTRANSFERASE PROTEIN-RELATED"/>
    <property type="match status" value="1"/>
</dbReference>
<dbReference type="Pfam" id="PF02545">
    <property type="entry name" value="Maf"/>
    <property type="match status" value="1"/>
</dbReference>
<dbReference type="PIRSF" id="PIRSF006305">
    <property type="entry name" value="Maf"/>
    <property type="match status" value="1"/>
</dbReference>
<dbReference type="SUPFAM" id="SSF52972">
    <property type="entry name" value="ITPase-like"/>
    <property type="match status" value="1"/>
</dbReference>
<name>NTPPA_LACCB</name>